<name>PUR5_OLEA2</name>
<keyword id="KW-0067">ATP-binding</keyword>
<keyword id="KW-0963">Cytoplasm</keyword>
<keyword id="KW-0436">Ligase</keyword>
<keyword id="KW-0547">Nucleotide-binding</keyword>
<keyword id="KW-0658">Purine biosynthesis</keyword>
<keyword id="KW-1185">Reference proteome</keyword>
<dbReference type="EC" id="6.3.3.1" evidence="1"/>
<dbReference type="EMBL" id="CP000112">
    <property type="protein sequence ID" value="ABB38469.1"/>
    <property type="molecule type" value="Genomic_DNA"/>
</dbReference>
<dbReference type="RefSeq" id="WP_011367619.1">
    <property type="nucleotide sequence ID" value="NC_007519.1"/>
</dbReference>
<dbReference type="SMR" id="Q311C7"/>
<dbReference type="STRING" id="207559.Dde_1672"/>
<dbReference type="KEGG" id="dde:Dde_1672"/>
<dbReference type="eggNOG" id="COG0150">
    <property type="taxonomic scope" value="Bacteria"/>
</dbReference>
<dbReference type="HOGENOM" id="CLU_047116_0_0_7"/>
<dbReference type="UniPathway" id="UPA00074">
    <property type="reaction ID" value="UER00129"/>
</dbReference>
<dbReference type="Proteomes" id="UP000002710">
    <property type="component" value="Chromosome"/>
</dbReference>
<dbReference type="GO" id="GO:0005829">
    <property type="term" value="C:cytosol"/>
    <property type="evidence" value="ECO:0007669"/>
    <property type="project" value="TreeGrafter"/>
</dbReference>
<dbReference type="GO" id="GO:0005524">
    <property type="term" value="F:ATP binding"/>
    <property type="evidence" value="ECO:0007669"/>
    <property type="project" value="UniProtKB-KW"/>
</dbReference>
<dbReference type="GO" id="GO:0004637">
    <property type="term" value="F:phosphoribosylamine-glycine ligase activity"/>
    <property type="evidence" value="ECO:0007669"/>
    <property type="project" value="TreeGrafter"/>
</dbReference>
<dbReference type="GO" id="GO:0004641">
    <property type="term" value="F:phosphoribosylformylglycinamidine cyclo-ligase activity"/>
    <property type="evidence" value="ECO:0007669"/>
    <property type="project" value="UniProtKB-UniRule"/>
</dbReference>
<dbReference type="GO" id="GO:0006189">
    <property type="term" value="P:'de novo' IMP biosynthetic process"/>
    <property type="evidence" value="ECO:0007669"/>
    <property type="project" value="UniProtKB-UniRule"/>
</dbReference>
<dbReference type="GO" id="GO:0046084">
    <property type="term" value="P:adenine biosynthetic process"/>
    <property type="evidence" value="ECO:0007669"/>
    <property type="project" value="TreeGrafter"/>
</dbReference>
<dbReference type="CDD" id="cd02196">
    <property type="entry name" value="PurM"/>
    <property type="match status" value="1"/>
</dbReference>
<dbReference type="FunFam" id="3.30.1330.10:FF:000001">
    <property type="entry name" value="Phosphoribosylformylglycinamidine cyclo-ligase"/>
    <property type="match status" value="1"/>
</dbReference>
<dbReference type="FunFam" id="3.90.650.10:FF:000011">
    <property type="entry name" value="Phosphoribosylformylglycinamidine cyclo-ligase"/>
    <property type="match status" value="1"/>
</dbReference>
<dbReference type="Gene3D" id="3.90.650.10">
    <property type="entry name" value="PurM-like C-terminal domain"/>
    <property type="match status" value="1"/>
</dbReference>
<dbReference type="Gene3D" id="3.30.1330.10">
    <property type="entry name" value="PurM-like, N-terminal domain"/>
    <property type="match status" value="1"/>
</dbReference>
<dbReference type="HAMAP" id="MF_00741">
    <property type="entry name" value="AIRS"/>
    <property type="match status" value="1"/>
</dbReference>
<dbReference type="InterPro" id="IPR010918">
    <property type="entry name" value="PurM-like_C_dom"/>
</dbReference>
<dbReference type="InterPro" id="IPR036676">
    <property type="entry name" value="PurM-like_C_sf"/>
</dbReference>
<dbReference type="InterPro" id="IPR016188">
    <property type="entry name" value="PurM-like_N"/>
</dbReference>
<dbReference type="InterPro" id="IPR036921">
    <property type="entry name" value="PurM-like_N_sf"/>
</dbReference>
<dbReference type="InterPro" id="IPR004733">
    <property type="entry name" value="PurM_cligase"/>
</dbReference>
<dbReference type="NCBIfam" id="TIGR00878">
    <property type="entry name" value="purM"/>
    <property type="match status" value="1"/>
</dbReference>
<dbReference type="PANTHER" id="PTHR10520:SF12">
    <property type="entry name" value="TRIFUNCTIONAL PURINE BIOSYNTHETIC PROTEIN ADENOSINE-3"/>
    <property type="match status" value="1"/>
</dbReference>
<dbReference type="PANTHER" id="PTHR10520">
    <property type="entry name" value="TRIFUNCTIONAL PURINE BIOSYNTHETIC PROTEIN ADENOSINE-3-RELATED"/>
    <property type="match status" value="1"/>
</dbReference>
<dbReference type="Pfam" id="PF00586">
    <property type="entry name" value="AIRS"/>
    <property type="match status" value="1"/>
</dbReference>
<dbReference type="Pfam" id="PF02769">
    <property type="entry name" value="AIRS_C"/>
    <property type="match status" value="1"/>
</dbReference>
<dbReference type="SUPFAM" id="SSF56042">
    <property type="entry name" value="PurM C-terminal domain-like"/>
    <property type="match status" value="1"/>
</dbReference>
<dbReference type="SUPFAM" id="SSF55326">
    <property type="entry name" value="PurM N-terminal domain-like"/>
    <property type="match status" value="1"/>
</dbReference>
<accession>Q311C7</accession>
<feature type="chain" id="PRO_0000258352" description="Phosphoribosylformylglycinamidine cyclo-ligase">
    <location>
        <begin position="1"/>
        <end position="351"/>
    </location>
</feature>
<gene>
    <name evidence="1" type="primary">purM</name>
    <name type="ordered locus">Dde_1672</name>
</gene>
<comment type="catalytic activity">
    <reaction evidence="1">
        <text>2-formamido-N(1)-(5-O-phospho-beta-D-ribosyl)acetamidine + ATP = 5-amino-1-(5-phospho-beta-D-ribosyl)imidazole + ADP + phosphate + H(+)</text>
        <dbReference type="Rhea" id="RHEA:23032"/>
        <dbReference type="ChEBI" id="CHEBI:15378"/>
        <dbReference type="ChEBI" id="CHEBI:30616"/>
        <dbReference type="ChEBI" id="CHEBI:43474"/>
        <dbReference type="ChEBI" id="CHEBI:137981"/>
        <dbReference type="ChEBI" id="CHEBI:147287"/>
        <dbReference type="ChEBI" id="CHEBI:456216"/>
        <dbReference type="EC" id="6.3.3.1"/>
    </reaction>
</comment>
<comment type="pathway">
    <text evidence="1">Purine metabolism; IMP biosynthesis via de novo pathway; 5-amino-1-(5-phospho-D-ribosyl)imidazole from N(2)-formyl-N(1)-(5-phospho-D-ribosyl)glycinamide: step 2/2.</text>
</comment>
<comment type="subcellular location">
    <subcellularLocation>
        <location evidence="1">Cytoplasm</location>
    </subcellularLocation>
</comment>
<comment type="similarity">
    <text evidence="1">Belongs to the AIR synthase family.</text>
</comment>
<sequence>MPEDRAKAYTEAGVDINAGNALVSRIKSMVASTHTKGVISDIGGFGGLFKPDLGGMEDPVLVSSTDGVGTKLKLAFMFDKHDTVGIDLVAMSVNDVLVQGAKPLFFLDYFATGKLDVEAAAQVVSGVAEGCRQAQCALLGGETAEMPDMYAPGEYDLAGFCVGIADNARIVDGSDIRVGDVIIGLGASGVHSNGYTLVRKLFEKSGLGADDIMPGTDASVRDVLMTPTRIYVETIRNLMRDFQIKGMVHVTGGGFYDNIPRVLPASVDARIAFGAWDILPVFHWLRDLGELSWPEMLQIFNCGIGYVVIVGQEEADDVLGRLAALDQPAWAIGTVERRREESEEQVYVDFG</sequence>
<reference key="1">
    <citation type="journal article" date="2011" name="J. Bacteriol.">
        <title>Complete genome sequence and updated annotation of Desulfovibrio alaskensis G20.</title>
        <authorList>
            <person name="Hauser L.J."/>
            <person name="Land M.L."/>
            <person name="Brown S.D."/>
            <person name="Larimer F."/>
            <person name="Keller K.L."/>
            <person name="Rapp-Giles B.J."/>
            <person name="Price M.N."/>
            <person name="Lin M."/>
            <person name="Bruce D.C."/>
            <person name="Detter J.C."/>
            <person name="Tapia R."/>
            <person name="Han C.S."/>
            <person name="Goodwin L.A."/>
            <person name="Cheng J.F."/>
            <person name="Pitluck S."/>
            <person name="Copeland A."/>
            <person name="Lucas S."/>
            <person name="Nolan M."/>
            <person name="Lapidus A.L."/>
            <person name="Palumbo A.V."/>
            <person name="Wall J.D."/>
        </authorList>
    </citation>
    <scope>NUCLEOTIDE SEQUENCE [LARGE SCALE GENOMIC DNA]</scope>
    <source>
        <strain>ATCC BAA-1058 / DSM 17464 / G20</strain>
    </source>
</reference>
<proteinExistence type="inferred from homology"/>
<organism>
    <name type="scientific">Oleidesulfovibrio alaskensis (strain ATCC BAA-1058 / DSM 17464 / G20)</name>
    <name type="common">Desulfovibrio alaskensis</name>
    <dbReference type="NCBI Taxonomy" id="207559"/>
    <lineage>
        <taxon>Bacteria</taxon>
        <taxon>Pseudomonadati</taxon>
        <taxon>Thermodesulfobacteriota</taxon>
        <taxon>Desulfovibrionia</taxon>
        <taxon>Desulfovibrionales</taxon>
        <taxon>Desulfovibrionaceae</taxon>
        <taxon>Oleidesulfovibrio</taxon>
    </lineage>
</organism>
<evidence type="ECO:0000255" key="1">
    <source>
        <dbReference type="HAMAP-Rule" id="MF_00741"/>
    </source>
</evidence>
<protein>
    <recommendedName>
        <fullName evidence="1">Phosphoribosylformylglycinamidine cyclo-ligase</fullName>
        <ecNumber evidence="1">6.3.3.1</ecNumber>
    </recommendedName>
    <alternativeName>
        <fullName evidence="1">AIR synthase</fullName>
    </alternativeName>
    <alternativeName>
        <fullName evidence="1">AIRS</fullName>
    </alternativeName>
    <alternativeName>
        <fullName evidence="1">Phosphoribosyl-aminoimidazole synthetase</fullName>
    </alternativeName>
</protein>